<feature type="chain" id="PRO_0000179581" description="ATP-dependent Clp protease proteolytic subunit 1">
    <location>
        <begin position="1"/>
        <end position="198"/>
    </location>
</feature>
<feature type="active site" description="Nucleophile" evidence="1">
    <location>
        <position position="98"/>
    </location>
</feature>
<feature type="active site" evidence="1">
    <location>
        <position position="123"/>
    </location>
</feature>
<organism>
    <name type="scientific">Leptospira interrogans serogroup Icterohaemorrhagiae serovar copenhageni (strain Fiocruz L1-130)</name>
    <dbReference type="NCBI Taxonomy" id="267671"/>
    <lineage>
        <taxon>Bacteria</taxon>
        <taxon>Pseudomonadati</taxon>
        <taxon>Spirochaetota</taxon>
        <taxon>Spirochaetia</taxon>
        <taxon>Leptospirales</taxon>
        <taxon>Leptospiraceae</taxon>
        <taxon>Leptospira</taxon>
    </lineage>
</organism>
<dbReference type="EC" id="3.4.21.92" evidence="1"/>
<dbReference type="EMBL" id="AE016823">
    <property type="protein sequence ID" value="AAS70016.1"/>
    <property type="molecule type" value="Genomic_DNA"/>
</dbReference>
<dbReference type="SMR" id="Q72SG6"/>
<dbReference type="MEROPS" id="S14.001"/>
<dbReference type="KEGG" id="lic:LIC_11417"/>
<dbReference type="HOGENOM" id="CLU_058707_3_2_12"/>
<dbReference type="Proteomes" id="UP000007037">
    <property type="component" value="Chromosome I"/>
</dbReference>
<dbReference type="GO" id="GO:0005737">
    <property type="term" value="C:cytoplasm"/>
    <property type="evidence" value="ECO:0007669"/>
    <property type="project" value="UniProtKB-SubCell"/>
</dbReference>
<dbReference type="GO" id="GO:0009368">
    <property type="term" value="C:endopeptidase Clp complex"/>
    <property type="evidence" value="ECO:0007669"/>
    <property type="project" value="TreeGrafter"/>
</dbReference>
<dbReference type="GO" id="GO:0004176">
    <property type="term" value="F:ATP-dependent peptidase activity"/>
    <property type="evidence" value="ECO:0007669"/>
    <property type="project" value="InterPro"/>
</dbReference>
<dbReference type="GO" id="GO:0051117">
    <property type="term" value="F:ATPase binding"/>
    <property type="evidence" value="ECO:0007669"/>
    <property type="project" value="TreeGrafter"/>
</dbReference>
<dbReference type="GO" id="GO:0004252">
    <property type="term" value="F:serine-type endopeptidase activity"/>
    <property type="evidence" value="ECO:0007669"/>
    <property type="project" value="UniProtKB-UniRule"/>
</dbReference>
<dbReference type="GO" id="GO:0006515">
    <property type="term" value="P:protein quality control for misfolded or incompletely synthesized proteins"/>
    <property type="evidence" value="ECO:0007669"/>
    <property type="project" value="TreeGrafter"/>
</dbReference>
<dbReference type="CDD" id="cd07017">
    <property type="entry name" value="S14_ClpP_2"/>
    <property type="match status" value="1"/>
</dbReference>
<dbReference type="FunFam" id="3.90.226.10:FF:000059">
    <property type="entry name" value="ATP-dependent Clp protease proteolytic subunit"/>
    <property type="match status" value="1"/>
</dbReference>
<dbReference type="Gene3D" id="3.90.226.10">
    <property type="entry name" value="2-enoyl-CoA Hydratase, Chain A, domain 1"/>
    <property type="match status" value="1"/>
</dbReference>
<dbReference type="HAMAP" id="MF_00444">
    <property type="entry name" value="ClpP"/>
    <property type="match status" value="1"/>
</dbReference>
<dbReference type="InterPro" id="IPR001907">
    <property type="entry name" value="ClpP"/>
</dbReference>
<dbReference type="InterPro" id="IPR029045">
    <property type="entry name" value="ClpP/crotonase-like_dom_sf"/>
</dbReference>
<dbReference type="InterPro" id="IPR023562">
    <property type="entry name" value="ClpP/TepA"/>
</dbReference>
<dbReference type="InterPro" id="IPR033135">
    <property type="entry name" value="ClpP_His_AS"/>
</dbReference>
<dbReference type="InterPro" id="IPR018215">
    <property type="entry name" value="ClpP_Ser_AS"/>
</dbReference>
<dbReference type="NCBIfam" id="TIGR00493">
    <property type="entry name" value="clpP"/>
    <property type="match status" value="1"/>
</dbReference>
<dbReference type="NCBIfam" id="NF001368">
    <property type="entry name" value="PRK00277.1"/>
    <property type="match status" value="1"/>
</dbReference>
<dbReference type="NCBIfam" id="NF009205">
    <property type="entry name" value="PRK12553.1"/>
    <property type="match status" value="1"/>
</dbReference>
<dbReference type="PANTHER" id="PTHR10381">
    <property type="entry name" value="ATP-DEPENDENT CLP PROTEASE PROTEOLYTIC SUBUNIT"/>
    <property type="match status" value="1"/>
</dbReference>
<dbReference type="PANTHER" id="PTHR10381:SF70">
    <property type="entry name" value="ATP-DEPENDENT CLP PROTEASE PROTEOLYTIC SUBUNIT"/>
    <property type="match status" value="1"/>
</dbReference>
<dbReference type="Pfam" id="PF00574">
    <property type="entry name" value="CLP_protease"/>
    <property type="match status" value="1"/>
</dbReference>
<dbReference type="PRINTS" id="PR00127">
    <property type="entry name" value="CLPPROTEASEP"/>
</dbReference>
<dbReference type="SUPFAM" id="SSF52096">
    <property type="entry name" value="ClpP/crotonase"/>
    <property type="match status" value="1"/>
</dbReference>
<dbReference type="PROSITE" id="PS00382">
    <property type="entry name" value="CLP_PROTEASE_HIS"/>
    <property type="match status" value="1"/>
</dbReference>
<dbReference type="PROSITE" id="PS00381">
    <property type="entry name" value="CLP_PROTEASE_SER"/>
    <property type="match status" value="1"/>
</dbReference>
<accession>Q72SG6</accession>
<sequence length="198" mass="22112">MSVIPYVIEQTSRGERSYDIFSRLLKDRIIFLGNAINDDYANVITAQLLFLEAENPERDIYLYLNSPGGYVSSGLAIYDTMQYIKPDVRTLCLGQASSMAALLLAGGAAGKRSALPNARIMMHQPMGGATGQASDIEIQAREVLKLKEILNSIYHKHTGKTVEQIQKDTERNFYMTADEAKNYGIIDTVIQIDRKQTE</sequence>
<proteinExistence type="inferred from homology"/>
<reference key="1">
    <citation type="journal article" date="2004" name="J. Bacteriol.">
        <title>Comparative genomics of two Leptospira interrogans serovars reveals novel insights into physiology and pathogenesis.</title>
        <authorList>
            <person name="Nascimento A.L.T.O."/>
            <person name="Ko A.I."/>
            <person name="Martins E.A.L."/>
            <person name="Monteiro-Vitorello C.B."/>
            <person name="Ho P.L."/>
            <person name="Haake D.A."/>
            <person name="Verjovski-Almeida S."/>
            <person name="Hartskeerl R.A."/>
            <person name="Marques M.V."/>
            <person name="Oliveira M.C."/>
            <person name="Menck C.F.M."/>
            <person name="Leite L.C.C."/>
            <person name="Carrer H."/>
            <person name="Coutinho L.L."/>
            <person name="Degrave W.M."/>
            <person name="Dellagostin O.A."/>
            <person name="El-Dorry H."/>
            <person name="Ferro E.S."/>
            <person name="Ferro M.I.T."/>
            <person name="Furlan L.R."/>
            <person name="Gamberini M."/>
            <person name="Giglioti E.A."/>
            <person name="Goes-Neto A."/>
            <person name="Goldman G.H."/>
            <person name="Goldman M.H.S."/>
            <person name="Harakava R."/>
            <person name="Jeronimo S.M.B."/>
            <person name="Junqueira-de-Azevedo I.L.M."/>
            <person name="Kimura E.T."/>
            <person name="Kuramae E.E."/>
            <person name="Lemos E.G.M."/>
            <person name="Lemos M.V.F."/>
            <person name="Marino C.L."/>
            <person name="Nunes L.R."/>
            <person name="de Oliveira R.C."/>
            <person name="Pereira G.G."/>
            <person name="Reis M.S."/>
            <person name="Schriefer A."/>
            <person name="Siqueira W.J."/>
            <person name="Sommer P."/>
            <person name="Tsai S.M."/>
            <person name="Simpson A.J.G."/>
            <person name="Ferro J.A."/>
            <person name="Camargo L.E.A."/>
            <person name="Kitajima J.P."/>
            <person name="Setubal J.C."/>
            <person name="Van Sluys M.A."/>
        </authorList>
    </citation>
    <scope>NUCLEOTIDE SEQUENCE [LARGE SCALE GENOMIC DNA]</scope>
    <source>
        <strain>Fiocruz L1-130</strain>
    </source>
</reference>
<comment type="function">
    <text evidence="1">Cleaves peptides in various proteins in a process that requires ATP hydrolysis. Has a chymotrypsin-like activity. Plays a major role in the degradation of misfolded proteins.</text>
</comment>
<comment type="catalytic activity">
    <reaction evidence="1">
        <text>Hydrolysis of proteins to small peptides in the presence of ATP and magnesium. alpha-casein is the usual test substrate. In the absence of ATP, only oligopeptides shorter than five residues are hydrolyzed (such as succinyl-Leu-Tyr-|-NHMec, and Leu-Tyr-Leu-|-Tyr-Trp, in which cleavage of the -Tyr-|-Leu- and -Tyr-|-Trp bonds also occurs).</text>
        <dbReference type="EC" id="3.4.21.92"/>
    </reaction>
</comment>
<comment type="subunit">
    <text evidence="1">Fourteen ClpP subunits assemble into 2 heptameric rings which stack back to back to give a disk-like structure with a central cavity, resembling the structure of eukaryotic proteasomes.</text>
</comment>
<comment type="subcellular location">
    <subcellularLocation>
        <location evidence="1">Cytoplasm</location>
    </subcellularLocation>
</comment>
<comment type="similarity">
    <text evidence="1">Belongs to the peptidase S14 family.</text>
</comment>
<protein>
    <recommendedName>
        <fullName evidence="1">ATP-dependent Clp protease proteolytic subunit 1</fullName>
        <ecNumber evidence="1">3.4.21.92</ecNumber>
    </recommendedName>
    <alternativeName>
        <fullName evidence="1">Endopeptidase Clp 1</fullName>
    </alternativeName>
</protein>
<evidence type="ECO:0000255" key="1">
    <source>
        <dbReference type="HAMAP-Rule" id="MF_00444"/>
    </source>
</evidence>
<name>CLPP1_LEPIC</name>
<keyword id="KW-0963">Cytoplasm</keyword>
<keyword id="KW-0378">Hydrolase</keyword>
<keyword id="KW-0645">Protease</keyword>
<keyword id="KW-0720">Serine protease</keyword>
<gene>
    <name evidence="1" type="primary">clpP1</name>
    <name type="ordered locus">LIC_11417</name>
</gene>